<feature type="chain" id="PRO_0000238437" description="ATP synthase subunit alpha, chloroplastic">
    <location>
        <begin position="1"/>
        <end position="502"/>
    </location>
</feature>
<feature type="binding site" evidence="1">
    <location>
        <begin position="170"/>
        <end position="177"/>
    </location>
    <ligand>
        <name>ATP</name>
        <dbReference type="ChEBI" id="CHEBI:30616"/>
    </ligand>
</feature>
<feature type="site" description="Required for activity" evidence="1">
    <location>
        <position position="363"/>
    </location>
</feature>
<gene>
    <name evidence="1" type="primary">atpA</name>
</gene>
<protein>
    <recommendedName>
        <fullName evidence="1">ATP synthase subunit alpha, chloroplastic</fullName>
        <ecNumber evidence="1">7.1.2.2</ecNumber>
    </recommendedName>
    <alternativeName>
        <fullName evidence="1">ATP synthase F1 sector subunit alpha</fullName>
    </alternativeName>
    <alternativeName>
        <fullName evidence="1">F-ATPase subunit alpha</fullName>
    </alternativeName>
</protein>
<sequence length="502" mass="54081">MVKIQPDEISSIIRQQIAQYSEEVKVVNVGTVFQVGDGIARIYGLEKVMAGELLEFEDGTIGIALNLETKNVGAVLMGDGLAIQEGSSVRATGKIAQIPVSESYLGRVVNSLALPIDGKGAINSSETRLIESLAPGIISRRSVHEPLQTGLVAVDAMIPIGRGQRELIIGDRQTGKTAIAVDTIINQKGKDVICVYVAIGQKASSIAQVVNSLEERGCLSYTIIVAATADTPATLQYLAPYTGATLAEYFMYKGRHTLVIYDDLSKQAQAYREMSLLLRRPPGREAFPGDVFYLHSRLLERAAKLSDQLGGGSMTALPIVETQEGDVSAYIPTNVISITDGQIFLSGDIFNSGIRPAINVGISVSRVGSAAQPKAMKKVAGKLKLELAQFAELEAFSQFASDLDQATQKQLSRGSRLRELLKQAQSSPLALEDQVSTIYAGINGYLDGIPVENVRAFLVELRQYLASSKPKYGQILRDTEAFTEEAESILKEALVELTGSKN</sequence>
<dbReference type="EC" id="7.1.2.2" evidence="1"/>
<dbReference type="EMBL" id="AY835431">
    <property type="protein sequence ID" value="AAV80689.1"/>
    <property type="molecule type" value="Genomic_DNA"/>
</dbReference>
<dbReference type="RefSeq" id="YP_636267.1">
    <property type="nucleotide sequence ID" value="NC_008114.1"/>
</dbReference>
<dbReference type="SMR" id="Q3ZJ00"/>
<dbReference type="GeneID" id="4108761"/>
<dbReference type="GO" id="GO:0009535">
    <property type="term" value="C:chloroplast thylakoid membrane"/>
    <property type="evidence" value="ECO:0007669"/>
    <property type="project" value="UniProtKB-SubCell"/>
</dbReference>
<dbReference type="GO" id="GO:0045259">
    <property type="term" value="C:proton-transporting ATP synthase complex"/>
    <property type="evidence" value="ECO:0007669"/>
    <property type="project" value="UniProtKB-KW"/>
</dbReference>
<dbReference type="GO" id="GO:0043531">
    <property type="term" value="F:ADP binding"/>
    <property type="evidence" value="ECO:0007669"/>
    <property type="project" value="TreeGrafter"/>
</dbReference>
<dbReference type="GO" id="GO:0005524">
    <property type="term" value="F:ATP binding"/>
    <property type="evidence" value="ECO:0007669"/>
    <property type="project" value="UniProtKB-UniRule"/>
</dbReference>
<dbReference type="GO" id="GO:0046933">
    <property type="term" value="F:proton-transporting ATP synthase activity, rotational mechanism"/>
    <property type="evidence" value="ECO:0007669"/>
    <property type="project" value="UniProtKB-UniRule"/>
</dbReference>
<dbReference type="CDD" id="cd18113">
    <property type="entry name" value="ATP-synt_F1_alpha_C"/>
    <property type="match status" value="1"/>
</dbReference>
<dbReference type="CDD" id="cd18116">
    <property type="entry name" value="ATP-synt_F1_alpha_N"/>
    <property type="match status" value="1"/>
</dbReference>
<dbReference type="CDD" id="cd01132">
    <property type="entry name" value="F1-ATPase_alpha_CD"/>
    <property type="match status" value="1"/>
</dbReference>
<dbReference type="FunFam" id="1.20.150.20:FF:000001">
    <property type="entry name" value="ATP synthase subunit alpha"/>
    <property type="match status" value="1"/>
</dbReference>
<dbReference type="FunFam" id="2.40.30.20:FF:000001">
    <property type="entry name" value="ATP synthase subunit alpha"/>
    <property type="match status" value="1"/>
</dbReference>
<dbReference type="FunFam" id="3.40.50.300:FF:000002">
    <property type="entry name" value="ATP synthase subunit alpha"/>
    <property type="match status" value="1"/>
</dbReference>
<dbReference type="Gene3D" id="2.40.30.20">
    <property type="match status" value="1"/>
</dbReference>
<dbReference type="Gene3D" id="1.20.150.20">
    <property type="entry name" value="ATP synthase alpha/beta chain, C-terminal domain"/>
    <property type="match status" value="1"/>
</dbReference>
<dbReference type="Gene3D" id="3.40.50.300">
    <property type="entry name" value="P-loop containing nucleotide triphosphate hydrolases"/>
    <property type="match status" value="1"/>
</dbReference>
<dbReference type="HAMAP" id="MF_01346">
    <property type="entry name" value="ATP_synth_alpha_bact"/>
    <property type="match status" value="1"/>
</dbReference>
<dbReference type="InterPro" id="IPR023366">
    <property type="entry name" value="ATP_synth_asu-like_sf"/>
</dbReference>
<dbReference type="InterPro" id="IPR000793">
    <property type="entry name" value="ATP_synth_asu_C"/>
</dbReference>
<dbReference type="InterPro" id="IPR038376">
    <property type="entry name" value="ATP_synth_asu_C_sf"/>
</dbReference>
<dbReference type="InterPro" id="IPR033732">
    <property type="entry name" value="ATP_synth_F1_a_nt-bd_dom"/>
</dbReference>
<dbReference type="InterPro" id="IPR005294">
    <property type="entry name" value="ATP_synth_F1_asu"/>
</dbReference>
<dbReference type="InterPro" id="IPR020003">
    <property type="entry name" value="ATPase_a/bsu_AS"/>
</dbReference>
<dbReference type="InterPro" id="IPR004100">
    <property type="entry name" value="ATPase_F1/V1/A1_a/bsu_N"/>
</dbReference>
<dbReference type="InterPro" id="IPR036121">
    <property type="entry name" value="ATPase_F1/V1/A1_a/bsu_N_sf"/>
</dbReference>
<dbReference type="InterPro" id="IPR000194">
    <property type="entry name" value="ATPase_F1/V1/A1_a/bsu_nucl-bd"/>
</dbReference>
<dbReference type="InterPro" id="IPR027417">
    <property type="entry name" value="P-loop_NTPase"/>
</dbReference>
<dbReference type="NCBIfam" id="TIGR00962">
    <property type="entry name" value="atpA"/>
    <property type="match status" value="1"/>
</dbReference>
<dbReference type="NCBIfam" id="NF009884">
    <property type="entry name" value="PRK13343.1"/>
    <property type="match status" value="1"/>
</dbReference>
<dbReference type="PANTHER" id="PTHR48082">
    <property type="entry name" value="ATP SYNTHASE SUBUNIT ALPHA, MITOCHONDRIAL"/>
    <property type="match status" value="1"/>
</dbReference>
<dbReference type="PANTHER" id="PTHR48082:SF2">
    <property type="entry name" value="ATP SYNTHASE SUBUNIT ALPHA, MITOCHONDRIAL"/>
    <property type="match status" value="1"/>
</dbReference>
<dbReference type="Pfam" id="PF00006">
    <property type="entry name" value="ATP-synt_ab"/>
    <property type="match status" value="1"/>
</dbReference>
<dbReference type="Pfam" id="PF00306">
    <property type="entry name" value="ATP-synt_ab_C"/>
    <property type="match status" value="1"/>
</dbReference>
<dbReference type="Pfam" id="PF02874">
    <property type="entry name" value="ATP-synt_ab_N"/>
    <property type="match status" value="1"/>
</dbReference>
<dbReference type="PIRSF" id="PIRSF039088">
    <property type="entry name" value="F_ATPase_subunit_alpha"/>
    <property type="match status" value="1"/>
</dbReference>
<dbReference type="SUPFAM" id="SSF47917">
    <property type="entry name" value="C-terminal domain of alpha and beta subunits of F1 ATP synthase"/>
    <property type="match status" value="1"/>
</dbReference>
<dbReference type="SUPFAM" id="SSF50615">
    <property type="entry name" value="N-terminal domain of alpha and beta subunits of F1 ATP synthase"/>
    <property type="match status" value="1"/>
</dbReference>
<dbReference type="SUPFAM" id="SSF52540">
    <property type="entry name" value="P-loop containing nucleoside triphosphate hydrolases"/>
    <property type="match status" value="1"/>
</dbReference>
<dbReference type="PROSITE" id="PS00152">
    <property type="entry name" value="ATPASE_ALPHA_BETA"/>
    <property type="match status" value="1"/>
</dbReference>
<geneLocation type="chloroplast"/>
<evidence type="ECO:0000255" key="1">
    <source>
        <dbReference type="HAMAP-Rule" id="MF_01346"/>
    </source>
</evidence>
<reference key="1">
    <citation type="journal article" date="2005" name="Mol. Biol. Evol.">
        <title>The chloroplast genome sequence of the green alga Pseudendoclonium akinetum (Ulvophyceae) reveals unusual structural features and new insights into the branching order of chlorophyte lineages.</title>
        <authorList>
            <person name="Pombert J.-F."/>
            <person name="Otis C."/>
            <person name="Lemieux C."/>
            <person name="Turmel M."/>
        </authorList>
    </citation>
    <scope>NUCLEOTIDE SEQUENCE [LARGE SCALE GENOMIC DNA]</scope>
    <source>
        <strain>UTEX 1912</strain>
    </source>
</reference>
<keyword id="KW-0066">ATP synthesis</keyword>
<keyword id="KW-0067">ATP-binding</keyword>
<keyword id="KW-0139">CF(1)</keyword>
<keyword id="KW-0150">Chloroplast</keyword>
<keyword id="KW-0375">Hydrogen ion transport</keyword>
<keyword id="KW-0406">Ion transport</keyword>
<keyword id="KW-0472">Membrane</keyword>
<keyword id="KW-0547">Nucleotide-binding</keyword>
<keyword id="KW-0934">Plastid</keyword>
<keyword id="KW-0793">Thylakoid</keyword>
<keyword id="KW-1278">Translocase</keyword>
<keyword id="KW-0813">Transport</keyword>
<accession>Q3ZJ00</accession>
<proteinExistence type="inferred from homology"/>
<comment type="function">
    <text evidence="1">Produces ATP from ADP in the presence of a proton gradient across the membrane. The alpha chain is a regulatory subunit.</text>
</comment>
<comment type="catalytic activity">
    <reaction evidence="1">
        <text>ATP + H2O + 4 H(+)(in) = ADP + phosphate + 5 H(+)(out)</text>
        <dbReference type="Rhea" id="RHEA:57720"/>
        <dbReference type="ChEBI" id="CHEBI:15377"/>
        <dbReference type="ChEBI" id="CHEBI:15378"/>
        <dbReference type="ChEBI" id="CHEBI:30616"/>
        <dbReference type="ChEBI" id="CHEBI:43474"/>
        <dbReference type="ChEBI" id="CHEBI:456216"/>
        <dbReference type="EC" id="7.1.2.2"/>
    </reaction>
</comment>
<comment type="subunit">
    <text evidence="1">F-type ATPases have 2 components, CF(1) - the catalytic core - and CF(0) - the membrane proton channel. CF(1) has five subunits: alpha(3), beta(3), gamma(1), delta(1), epsilon(1). CF(0) has four main subunits: a, b, b' and c.</text>
</comment>
<comment type="subcellular location">
    <subcellularLocation>
        <location evidence="1">Plastid</location>
        <location evidence="1">Chloroplast thylakoid membrane</location>
        <topology evidence="1">Peripheral membrane protein</topology>
    </subcellularLocation>
</comment>
<comment type="similarity">
    <text evidence="1">Belongs to the ATPase alpha/beta chains family.</text>
</comment>
<organism>
    <name type="scientific">Tupiella akineta</name>
    <name type="common">Green alga</name>
    <name type="synonym">Pseudendoclonium akinetum</name>
    <dbReference type="NCBI Taxonomy" id="160070"/>
    <lineage>
        <taxon>Eukaryota</taxon>
        <taxon>Viridiplantae</taxon>
        <taxon>Chlorophyta</taxon>
        <taxon>Ulvophyceae</taxon>
        <taxon>OUU clade</taxon>
        <taxon>Ulotrichales</taxon>
        <taxon>Tupiellaceae</taxon>
        <taxon>Tupiella</taxon>
    </lineage>
</organism>
<name>ATPA_TUPAK</name>